<sequence length="77" mass="8460">MGSFSIWHWLVVLAIVVLVFGTKKLRNLGSDLGGAVRGFKEGMKGAEEENTQPPPSHQQVTGHSIKSEIEEKDQTKV</sequence>
<gene>
    <name evidence="1" type="primary">tatA</name>
    <name type="ordered locus">Neut_1913</name>
</gene>
<keyword id="KW-0997">Cell inner membrane</keyword>
<keyword id="KW-1003">Cell membrane</keyword>
<keyword id="KW-0472">Membrane</keyword>
<keyword id="KW-0653">Protein transport</keyword>
<keyword id="KW-0811">Translocation</keyword>
<keyword id="KW-0812">Transmembrane</keyword>
<keyword id="KW-1133">Transmembrane helix</keyword>
<keyword id="KW-0813">Transport</keyword>
<evidence type="ECO:0000255" key="1">
    <source>
        <dbReference type="HAMAP-Rule" id="MF_00236"/>
    </source>
</evidence>
<evidence type="ECO:0000256" key="2">
    <source>
        <dbReference type="SAM" id="MobiDB-lite"/>
    </source>
</evidence>
<comment type="function">
    <text evidence="1">Part of the twin-arginine translocation (Tat) system that transports large folded proteins containing a characteristic twin-arginine motif in their signal peptide across membranes. TatA could form the protein-conducting channel of the Tat system.</text>
</comment>
<comment type="subunit">
    <text evidence="1">The Tat system comprises two distinct complexes: a TatABC complex, containing multiple copies of TatA, TatB and TatC subunits, and a separate TatA complex, containing only TatA subunits. Substrates initially bind to the TatABC complex, which probably triggers association of the separate TatA complex to form the active translocon.</text>
</comment>
<comment type="subcellular location">
    <subcellularLocation>
        <location evidence="1">Cell inner membrane</location>
        <topology evidence="1">Single-pass membrane protein</topology>
    </subcellularLocation>
</comment>
<comment type="similarity">
    <text evidence="1">Belongs to the TatA/E family.</text>
</comment>
<protein>
    <recommendedName>
        <fullName evidence="1">Sec-independent protein translocase protein TatA</fullName>
    </recommendedName>
</protein>
<feature type="chain" id="PRO_1000044409" description="Sec-independent protein translocase protein TatA">
    <location>
        <begin position="1"/>
        <end position="77"/>
    </location>
</feature>
<feature type="transmembrane region" description="Helical" evidence="1">
    <location>
        <begin position="1"/>
        <end position="21"/>
    </location>
</feature>
<feature type="region of interest" description="Disordered" evidence="2">
    <location>
        <begin position="40"/>
        <end position="77"/>
    </location>
</feature>
<feature type="compositionally biased region" description="Basic and acidic residues" evidence="2">
    <location>
        <begin position="65"/>
        <end position="77"/>
    </location>
</feature>
<name>TATA_NITEC</name>
<organism>
    <name type="scientific">Nitrosomonas eutropha (strain DSM 101675 / C91 / Nm57)</name>
    <dbReference type="NCBI Taxonomy" id="335283"/>
    <lineage>
        <taxon>Bacteria</taxon>
        <taxon>Pseudomonadati</taxon>
        <taxon>Pseudomonadota</taxon>
        <taxon>Betaproteobacteria</taxon>
        <taxon>Nitrosomonadales</taxon>
        <taxon>Nitrosomonadaceae</taxon>
        <taxon>Nitrosomonas</taxon>
    </lineage>
</organism>
<proteinExistence type="inferred from homology"/>
<accession>Q0AET7</accession>
<reference key="1">
    <citation type="journal article" date="2007" name="Environ. Microbiol.">
        <title>Whole-genome analysis of the ammonia-oxidizing bacterium, Nitrosomonas eutropha C91: implications for niche adaptation.</title>
        <authorList>
            <person name="Stein L.Y."/>
            <person name="Arp D.J."/>
            <person name="Berube P.M."/>
            <person name="Chain P.S."/>
            <person name="Hauser L."/>
            <person name="Jetten M.S."/>
            <person name="Klotz M.G."/>
            <person name="Larimer F.W."/>
            <person name="Norton J.M."/>
            <person name="Op den Camp H.J.M."/>
            <person name="Shin M."/>
            <person name="Wei X."/>
        </authorList>
    </citation>
    <scope>NUCLEOTIDE SEQUENCE [LARGE SCALE GENOMIC DNA]</scope>
    <source>
        <strain>DSM 101675 / C91 / Nm57</strain>
    </source>
</reference>
<dbReference type="EMBL" id="CP000450">
    <property type="protein sequence ID" value="ABI60145.1"/>
    <property type="molecule type" value="Genomic_DNA"/>
</dbReference>
<dbReference type="RefSeq" id="WP_011634947.1">
    <property type="nucleotide sequence ID" value="NC_008344.1"/>
</dbReference>
<dbReference type="SMR" id="Q0AET7"/>
<dbReference type="STRING" id="335283.Neut_1913"/>
<dbReference type="KEGG" id="net:Neut_1913"/>
<dbReference type="eggNOG" id="COG1826">
    <property type="taxonomic scope" value="Bacteria"/>
</dbReference>
<dbReference type="HOGENOM" id="CLU_086034_5_1_4"/>
<dbReference type="OrthoDB" id="7066617at2"/>
<dbReference type="Proteomes" id="UP000001966">
    <property type="component" value="Chromosome"/>
</dbReference>
<dbReference type="GO" id="GO:0033281">
    <property type="term" value="C:TAT protein transport complex"/>
    <property type="evidence" value="ECO:0007669"/>
    <property type="project" value="UniProtKB-UniRule"/>
</dbReference>
<dbReference type="GO" id="GO:0008320">
    <property type="term" value="F:protein transmembrane transporter activity"/>
    <property type="evidence" value="ECO:0007669"/>
    <property type="project" value="UniProtKB-UniRule"/>
</dbReference>
<dbReference type="GO" id="GO:0043953">
    <property type="term" value="P:protein transport by the Tat complex"/>
    <property type="evidence" value="ECO:0007669"/>
    <property type="project" value="UniProtKB-UniRule"/>
</dbReference>
<dbReference type="Gene3D" id="1.20.5.3310">
    <property type="match status" value="1"/>
</dbReference>
<dbReference type="HAMAP" id="MF_00236">
    <property type="entry name" value="TatA_E"/>
    <property type="match status" value="1"/>
</dbReference>
<dbReference type="InterPro" id="IPR003369">
    <property type="entry name" value="TatA/B/E"/>
</dbReference>
<dbReference type="InterPro" id="IPR006312">
    <property type="entry name" value="TatA/E"/>
</dbReference>
<dbReference type="NCBIfam" id="NF002813">
    <property type="entry name" value="PRK02958.1"/>
    <property type="match status" value="1"/>
</dbReference>
<dbReference type="NCBIfam" id="TIGR01411">
    <property type="entry name" value="tatAE"/>
    <property type="match status" value="1"/>
</dbReference>
<dbReference type="PANTHER" id="PTHR42982">
    <property type="entry name" value="SEC-INDEPENDENT PROTEIN TRANSLOCASE PROTEIN TATA"/>
    <property type="match status" value="1"/>
</dbReference>
<dbReference type="PANTHER" id="PTHR42982:SF1">
    <property type="entry name" value="SEC-INDEPENDENT PROTEIN TRANSLOCASE PROTEIN TATA"/>
    <property type="match status" value="1"/>
</dbReference>
<dbReference type="Pfam" id="PF02416">
    <property type="entry name" value="TatA_B_E"/>
    <property type="match status" value="1"/>
</dbReference>